<organism>
    <name type="scientific">Pisum sativum</name>
    <name type="common">Garden pea</name>
    <name type="synonym">Lathyrus oleraceus</name>
    <dbReference type="NCBI Taxonomy" id="3888"/>
    <lineage>
        <taxon>Eukaryota</taxon>
        <taxon>Viridiplantae</taxon>
        <taxon>Streptophyta</taxon>
        <taxon>Embryophyta</taxon>
        <taxon>Tracheophyta</taxon>
        <taxon>Spermatophyta</taxon>
        <taxon>Magnoliopsida</taxon>
        <taxon>eudicotyledons</taxon>
        <taxon>Gunneridae</taxon>
        <taxon>Pentapetalae</taxon>
        <taxon>rosids</taxon>
        <taxon>fabids</taxon>
        <taxon>Fabales</taxon>
        <taxon>Fabaceae</taxon>
        <taxon>Papilionoideae</taxon>
        <taxon>50 kb inversion clade</taxon>
        <taxon>NPAAA clade</taxon>
        <taxon>Hologalegina</taxon>
        <taxon>IRL clade</taxon>
        <taxon>Fabeae</taxon>
        <taxon>Pisum</taxon>
    </lineage>
</organism>
<name>AL7A1_PEA</name>
<dbReference type="EC" id="1.2.1.3"/>
<dbReference type="EMBL" id="X54359">
    <property type="protein sequence ID" value="CAA38243.1"/>
    <property type="molecule type" value="mRNA"/>
</dbReference>
<dbReference type="PIR" id="S11863">
    <property type="entry name" value="S11863"/>
</dbReference>
<dbReference type="RefSeq" id="NP_001414662.1">
    <property type="nucleotide sequence ID" value="NM_001427733.1"/>
</dbReference>
<dbReference type="SMR" id="P25795"/>
<dbReference type="GeneID" id="127135842"/>
<dbReference type="GO" id="GO:0004029">
    <property type="term" value="F:aldehyde dehydrogenase (NAD+) activity"/>
    <property type="evidence" value="ECO:0007669"/>
    <property type="project" value="UniProtKB-EC"/>
</dbReference>
<dbReference type="CDD" id="cd07130">
    <property type="entry name" value="ALDH_F7_AASADH"/>
    <property type="match status" value="1"/>
</dbReference>
<dbReference type="FunFam" id="3.40.309.10:FF:000018">
    <property type="entry name" value="Alpha-aminoadipic semialdehyde dehydrogenase"/>
    <property type="match status" value="1"/>
</dbReference>
<dbReference type="Gene3D" id="3.40.605.10">
    <property type="entry name" value="Aldehyde Dehydrogenase, Chain A, domain 1"/>
    <property type="match status" value="1"/>
</dbReference>
<dbReference type="Gene3D" id="3.40.309.10">
    <property type="entry name" value="Aldehyde Dehydrogenase, Chain A, domain 2"/>
    <property type="match status" value="1"/>
</dbReference>
<dbReference type="InterPro" id="IPR016161">
    <property type="entry name" value="Ald_DH/histidinol_DH"/>
</dbReference>
<dbReference type="InterPro" id="IPR016163">
    <property type="entry name" value="Ald_DH_C"/>
</dbReference>
<dbReference type="InterPro" id="IPR029510">
    <property type="entry name" value="Ald_DH_CS_GLU"/>
</dbReference>
<dbReference type="InterPro" id="IPR016162">
    <property type="entry name" value="Ald_DH_N"/>
</dbReference>
<dbReference type="InterPro" id="IPR015590">
    <property type="entry name" value="Aldehyde_DH_dom"/>
</dbReference>
<dbReference type="InterPro" id="IPR044638">
    <property type="entry name" value="ALDH7A1-like"/>
</dbReference>
<dbReference type="PANTHER" id="PTHR43521">
    <property type="entry name" value="ALPHA-AMINOADIPIC SEMIALDEHYDE DEHYDROGENASE"/>
    <property type="match status" value="1"/>
</dbReference>
<dbReference type="PANTHER" id="PTHR43521:SF1">
    <property type="entry name" value="ALPHA-AMINOADIPIC SEMIALDEHYDE DEHYDROGENASE"/>
    <property type="match status" value="1"/>
</dbReference>
<dbReference type="Pfam" id="PF00171">
    <property type="entry name" value="Aldedh"/>
    <property type="match status" value="1"/>
</dbReference>
<dbReference type="SUPFAM" id="SSF53720">
    <property type="entry name" value="ALDH-like"/>
    <property type="match status" value="1"/>
</dbReference>
<dbReference type="PROSITE" id="PS00687">
    <property type="entry name" value="ALDEHYDE_DEHYDR_GLU"/>
    <property type="match status" value="1"/>
</dbReference>
<evidence type="ECO:0000250" key="1"/>
<evidence type="ECO:0000255" key="2">
    <source>
        <dbReference type="PROSITE-ProRule" id="PRU10007"/>
    </source>
</evidence>
<evidence type="ECO:0000269" key="3">
    <source>
    </source>
</evidence>
<evidence type="ECO:0000305" key="4"/>
<protein>
    <recommendedName>
        <fullName>Aldehyde dehydrogenase family 7 member A1</fullName>
        <ecNumber>1.2.1.3</ecNumber>
    </recommendedName>
    <alternativeName>
        <fullName>Antiquitin-1</fullName>
    </alternativeName>
    <alternativeName>
        <fullName>Turgor-responsive protein 26G</fullName>
    </alternativeName>
</protein>
<keyword id="KW-0903">Direct protein sequencing</keyword>
<keyword id="KW-0520">NAD</keyword>
<keyword id="KW-0560">Oxidoreductase</keyword>
<keyword id="KW-0346">Stress response</keyword>
<accession>P25795</accession>
<reference key="1">
    <citation type="journal article" date="1990" name="Plant Mol. Biol.">
        <title>Turgor-responsive gene transcription and RNA levels increase rapidly when pea shoots are wilted. Sequence and expression of three inducible genes.</title>
        <authorList>
            <person name="Guerrero F.D."/>
            <person name="Jones J.T."/>
            <person name="Mullet J.E."/>
        </authorList>
    </citation>
    <scope>NUCLEOTIDE SEQUENCE [MRNA]</scope>
    <source>
        <strain>cv. Progress No. 9</strain>
    </source>
</reference>
<reference key="2">
    <citation type="journal article" date="2002" name="FEBS Lett.">
        <title>First purification of the antiquitin protein and demonstration of its enzymatic activity.</title>
        <authorList>
            <person name="Tang W.-K."/>
            <person name="Cheng C.H.K."/>
            <person name="Fong W.-P."/>
        </authorList>
    </citation>
    <scope>PROTEIN SEQUENCE OF 2-16</scope>
</reference>
<proteinExistence type="evidence at protein level"/>
<comment type="catalytic activity">
    <reaction>
        <text>an aldehyde + NAD(+) + H2O = a carboxylate + NADH + 2 H(+)</text>
        <dbReference type="Rhea" id="RHEA:16185"/>
        <dbReference type="ChEBI" id="CHEBI:15377"/>
        <dbReference type="ChEBI" id="CHEBI:15378"/>
        <dbReference type="ChEBI" id="CHEBI:17478"/>
        <dbReference type="ChEBI" id="CHEBI:29067"/>
        <dbReference type="ChEBI" id="CHEBI:57540"/>
        <dbReference type="ChEBI" id="CHEBI:57945"/>
        <dbReference type="EC" id="1.2.1.3"/>
    </reaction>
</comment>
<comment type="subunit">
    <text evidence="1">Homotetramer.</text>
</comment>
<comment type="induction">
    <text>By dehydration of shoots but not roots and not by heat shock or ABA.</text>
</comment>
<comment type="similarity">
    <text evidence="4">Belongs to the aldehyde dehydrogenase family.</text>
</comment>
<feature type="initiator methionine" description="Removed" evidence="3">
    <location>
        <position position="1"/>
    </location>
</feature>
<feature type="chain" id="PRO_0000056498" description="Aldehyde dehydrogenase family 7 member A1">
    <location>
        <begin position="2"/>
        <end position="508"/>
    </location>
</feature>
<feature type="active site" description="Proton acceptor" evidence="2">
    <location>
        <position position="266"/>
    </location>
</feature>
<feature type="active site" description="Nucleophile" evidence="2">
    <location>
        <position position="300"/>
    </location>
</feature>
<feature type="binding site" evidence="1">
    <location>
        <begin position="244"/>
        <end position="249"/>
    </location>
    <ligand>
        <name>NAD(+)</name>
        <dbReference type="ChEBI" id="CHEBI:57540"/>
    </ligand>
</feature>
<feature type="site" description="Transition state stabilizer" evidence="1">
    <location>
        <position position="165"/>
    </location>
</feature>
<sequence>MGSDSNNLGFLKEIGLGATNIGSFINGQWKANGPTVHSVNPSTNQVIASVTEATLDDYEEGLRASSEAAKTWRTVPAPKRGEIVRQIGDALRAKLDPLGRLVALEMGKILAEGIGEVQEIIDMCDYSVGLSRQLNGSIIPSERPEHMMFEVWNPLGIVGVITAFNFPCAVLGWNACIALVGGNTVVWKGAPTTPLITVAVTKLIAEVFERNNLPGAIFTALCGGADIGHAIAKDTRIPLVSFTGSSKVGALVQQTVSQRFGKTLLELSGNNAIIVMDDADITLAVRSIFFAAVGTAGQRCTTCRRLYLHESVYANVLEQLTALYKQVKIGNPLEEGTLVGPLHTRSAVENFKNGISAIKSQGGKIVTGGSVLESEGNFVVPTIVEISADAAVVKEELFAPVLYVMKFKDLEEAIALNNSVPQGLSSSIFTQKPSTIFKWIGPSGSDCGIVNVNIPTNGAEIGGAFGGEKATGGGREAGSDSWKQYMRRSTCTINYGSELPLAQGINFG</sequence>